<dbReference type="EMBL" id="AY116212">
    <property type="protein sequence ID" value="AAM76230.1"/>
    <property type="status" value="ALT_INIT"/>
    <property type="molecule type" value="mRNA"/>
</dbReference>
<dbReference type="RefSeq" id="NP_001028068.1">
    <property type="nucleotide sequence ID" value="NM_001032896.1"/>
</dbReference>
<dbReference type="SMR" id="Q8MIM3"/>
<dbReference type="FunCoup" id="Q8MIM3">
    <property type="interactions" value="740"/>
</dbReference>
<dbReference type="STRING" id="9544.ENSMMUP00000038527"/>
<dbReference type="PaxDb" id="9544-ENSMMUP00000023825"/>
<dbReference type="GeneID" id="574249"/>
<dbReference type="KEGG" id="mcc:574249"/>
<dbReference type="CTD" id="9970"/>
<dbReference type="eggNOG" id="KOG3575">
    <property type="taxonomic scope" value="Eukaryota"/>
</dbReference>
<dbReference type="HOGENOM" id="CLU_007368_12_0_1"/>
<dbReference type="InParanoid" id="Q8MIM3"/>
<dbReference type="OrthoDB" id="6355676at2759"/>
<dbReference type="Proteomes" id="UP000006718">
    <property type="component" value="Unassembled WGS sequence"/>
</dbReference>
<dbReference type="GO" id="GO:0000785">
    <property type="term" value="C:chromatin"/>
    <property type="evidence" value="ECO:0000318"/>
    <property type="project" value="GO_Central"/>
</dbReference>
<dbReference type="GO" id="GO:0005737">
    <property type="term" value="C:cytoplasm"/>
    <property type="evidence" value="ECO:0000250"/>
    <property type="project" value="UniProtKB"/>
</dbReference>
<dbReference type="GO" id="GO:0005856">
    <property type="term" value="C:cytoskeleton"/>
    <property type="evidence" value="ECO:0007669"/>
    <property type="project" value="UniProtKB-SubCell"/>
</dbReference>
<dbReference type="GO" id="GO:0005654">
    <property type="term" value="C:nucleoplasm"/>
    <property type="evidence" value="ECO:0007669"/>
    <property type="project" value="UniProtKB-ARBA"/>
</dbReference>
<dbReference type="GO" id="GO:0005634">
    <property type="term" value="C:nucleus"/>
    <property type="evidence" value="ECO:0000250"/>
    <property type="project" value="UniProtKB"/>
</dbReference>
<dbReference type="GO" id="GO:0034056">
    <property type="term" value="F:estrogen response element binding"/>
    <property type="evidence" value="ECO:0000318"/>
    <property type="project" value="GO_Central"/>
</dbReference>
<dbReference type="GO" id="GO:0004879">
    <property type="term" value="F:nuclear receptor activity"/>
    <property type="evidence" value="ECO:0000318"/>
    <property type="project" value="GO_Central"/>
</dbReference>
<dbReference type="GO" id="GO:0008270">
    <property type="term" value="F:zinc ion binding"/>
    <property type="evidence" value="ECO:0007669"/>
    <property type="project" value="UniProtKB-KW"/>
</dbReference>
<dbReference type="GO" id="GO:0006357">
    <property type="term" value="P:regulation of transcription by RNA polymerase II"/>
    <property type="evidence" value="ECO:0000318"/>
    <property type="project" value="GO_Central"/>
</dbReference>
<dbReference type="CDD" id="cd07156">
    <property type="entry name" value="NR_DBD_VDR_like"/>
    <property type="match status" value="1"/>
</dbReference>
<dbReference type="CDD" id="cd06934">
    <property type="entry name" value="NR_LBD_PXR_like"/>
    <property type="match status" value="1"/>
</dbReference>
<dbReference type="FunFam" id="1.10.565.10:FF:000025">
    <property type="entry name" value="Nuclear receptor subfamily 1 group I member 3"/>
    <property type="match status" value="1"/>
</dbReference>
<dbReference type="FunFam" id="3.30.50.10:FF:000035">
    <property type="entry name" value="Nuclear receptor subfamily 1 group I member 3"/>
    <property type="match status" value="1"/>
</dbReference>
<dbReference type="Gene3D" id="3.30.50.10">
    <property type="entry name" value="Erythroid Transcription Factor GATA-1, subunit A"/>
    <property type="match status" value="1"/>
</dbReference>
<dbReference type="Gene3D" id="1.10.565.10">
    <property type="entry name" value="Retinoid X Receptor"/>
    <property type="match status" value="1"/>
</dbReference>
<dbReference type="InterPro" id="IPR035500">
    <property type="entry name" value="NHR-like_dom_sf"/>
</dbReference>
<dbReference type="InterPro" id="IPR000536">
    <property type="entry name" value="Nucl_hrmn_rcpt_lig-bd"/>
</dbReference>
<dbReference type="InterPro" id="IPR050234">
    <property type="entry name" value="Nuclear_hormone_rcpt_NR1"/>
</dbReference>
<dbReference type="InterPro" id="IPR001723">
    <property type="entry name" value="Nuclear_hrmn_rcpt"/>
</dbReference>
<dbReference type="InterPro" id="IPR001728">
    <property type="entry name" value="ThyrH_rcpt"/>
</dbReference>
<dbReference type="InterPro" id="IPR001628">
    <property type="entry name" value="Znf_hrmn_rcpt"/>
</dbReference>
<dbReference type="InterPro" id="IPR013088">
    <property type="entry name" value="Znf_NHR/GATA"/>
</dbReference>
<dbReference type="PANTHER" id="PTHR24082">
    <property type="entry name" value="NUCLEAR HORMONE RECEPTOR"/>
    <property type="match status" value="1"/>
</dbReference>
<dbReference type="PANTHER" id="PTHR24082:SF231">
    <property type="entry name" value="NUCLEAR RECEPTOR SUBFAMILY 1 GROUP I MEMBER 3"/>
    <property type="match status" value="1"/>
</dbReference>
<dbReference type="Pfam" id="PF00104">
    <property type="entry name" value="Hormone_recep"/>
    <property type="match status" value="1"/>
</dbReference>
<dbReference type="Pfam" id="PF00105">
    <property type="entry name" value="zf-C4"/>
    <property type="match status" value="1"/>
</dbReference>
<dbReference type="PRINTS" id="PR00398">
    <property type="entry name" value="STRDHORMONER"/>
</dbReference>
<dbReference type="PRINTS" id="PR00047">
    <property type="entry name" value="STROIDFINGER"/>
</dbReference>
<dbReference type="PRINTS" id="PR00546">
    <property type="entry name" value="THYROIDHORMR"/>
</dbReference>
<dbReference type="SMART" id="SM00430">
    <property type="entry name" value="HOLI"/>
    <property type="match status" value="1"/>
</dbReference>
<dbReference type="SMART" id="SM00399">
    <property type="entry name" value="ZnF_C4"/>
    <property type="match status" value="1"/>
</dbReference>
<dbReference type="SUPFAM" id="SSF57716">
    <property type="entry name" value="Glucocorticoid receptor-like (DNA-binding domain)"/>
    <property type="match status" value="1"/>
</dbReference>
<dbReference type="SUPFAM" id="SSF48508">
    <property type="entry name" value="Nuclear receptor ligand-binding domain"/>
    <property type="match status" value="1"/>
</dbReference>
<dbReference type="PROSITE" id="PS51843">
    <property type="entry name" value="NR_LBD"/>
    <property type="match status" value="1"/>
</dbReference>
<dbReference type="PROSITE" id="PS00031">
    <property type="entry name" value="NUCLEAR_REC_DBD_1"/>
    <property type="match status" value="1"/>
</dbReference>
<dbReference type="PROSITE" id="PS51030">
    <property type="entry name" value="NUCLEAR_REC_DBD_2"/>
    <property type="match status" value="1"/>
</dbReference>
<gene>
    <name type="primary">NR1I3</name>
    <name type="synonym">CAR</name>
</gene>
<reference key="1">
    <citation type="submission" date="2002-05" db="EMBL/GenBank/DDBJ databases">
        <title>Monkey CAR regulates drug-metabolizing enzymes.</title>
        <authorList>
            <person name="Yueh M.-F."/>
            <person name="Raucy J."/>
        </authorList>
    </citation>
    <scope>NUCLEOTIDE SEQUENCE [MRNA]</scope>
</reference>
<organism>
    <name type="scientific">Macaca mulatta</name>
    <name type="common">Rhesus macaque</name>
    <dbReference type="NCBI Taxonomy" id="9544"/>
    <lineage>
        <taxon>Eukaryota</taxon>
        <taxon>Metazoa</taxon>
        <taxon>Chordata</taxon>
        <taxon>Craniata</taxon>
        <taxon>Vertebrata</taxon>
        <taxon>Euteleostomi</taxon>
        <taxon>Mammalia</taxon>
        <taxon>Eutheria</taxon>
        <taxon>Euarchontoglires</taxon>
        <taxon>Primates</taxon>
        <taxon>Haplorrhini</taxon>
        <taxon>Catarrhini</taxon>
        <taxon>Cercopithecidae</taxon>
        <taxon>Cercopithecinae</taxon>
        <taxon>Macaca</taxon>
    </lineage>
</organism>
<name>NR1I3_MACMU</name>
<comment type="function">
    <text evidence="1">Binds and transactivates the retinoic acid response elements that control expression of the retinoic acid receptor beta 2 and alcohol dehydrogenase 3 genes. Transactivates both the phenobarbital responsive element module of the human CYP2B6 gene and the CYP3A4 xenobiotic response element (By similarity).</text>
</comment>
<comment type="subunit">
    <text evidence="2">Heterodimer of NR1I3 and RXR. Interacts with PSMC4. Interacts with ECT2. Directly interacts with DNAJC7; this complex may also include HSP90 (By similarity). Interacts with CRY1 (By similarity). Interacts with CRY2 in a ligand-dependent manner (By similarity).</text>
</comment>
<comment type="subcellular location">
    <subcellularLocation>
        <location evidence="4">Nucleus</location>
    </subcellularLocation>
    <subcellularLocation>
        <location evidence="1">Cytoplasm</location>
    </subcellularLocation>
    <subcellularLocation>
        <location evidence="1">Cytoplasm</location>
        <location evidence="1">Cytoskeleton</location>
    </subcellularLocation>
    <text evidence="1">Recruited to the cytoplasm by DNAJC7.</text>
</comment>
<comment type="domain">
    <text>Composed by a short N-terminal domain followed by the DNA binding, hinge, and ligand binding/dimerization domains.</text>
</comment>
<comment type="PTM">
    <text evidence="1">Phosphorylated at Thr-38 by PKC, dephosphorylation of Thr-38 is required for nuclear translocation and activation.</text>
</comment>
<comment type="similarity">
    <text evidence="6">Belongs to the nuclear hormone receptor family. NR1 subfamily.</text>
</comment>
<comment type="sequence caution" evidence="6">
    <conflict type="erroneous initiation">
        <sequence resource="EMBL-CDS" id="AAM76230"/>
    </conflict>
</comment>
<evidence type="ECO:0000250" key="1"/>
<evidence type="ECO:0000250" key="2">
    <source>
        <dbReference type="UniProtKB" id="O35627"/>
    </source>
</evidence>
<evidence type="ECO:0000250" key="3">
    <source>
        <dbReference type="UniProtKB" id="Q14994"/>
    </source>
</evidence>
<evidence type="ECO:0000255" key="4">
    <source>
        <dbReference type="PROSITE-ProRule" id="PRU00407"/>
    </source>
</evidence>
<evidence type="ECO:0000255" key="5">
    <source>
        <dbReference type="PROSITE-ProRule" id="PRU01189"/>
    </source>
</evidence>
<evidence type="ECO:0000305" key="6"/>
<feature type="chain" id="PRO_0000053553" description="Nuclear receptor subfamily 1 group I member 3">
    <location>
        <begin position="1"/>
        <end position="352"/>
    </location>
</feature>
<feature type="domain" description="NR LBD" evidence="5">
    <location>
        <begin position="109"/>
        <end position="352"/>
    </location>
</feature>
<feature type="DNA-binding region" description="Nuclear receptor" evidence="4">
    <location>
        <begin position="8"/>
        <end position="83"/>
    </location>
</feature>
<feature type="zinc finger region" description="NR C4-type" evidence="4">
    <location>
        <begin position="11"/>
        <end position="31"/>
    </location>
</feature>
<feature type="zinc finger region" description="NR C4-type" evidence="4">
    <location>
        <begin position="47"/>
        <end position="71"/>
    </location>
</feature>
<feature type="modified residue" description="Phosphothreonine; by PKC" evidence="3">
    <location>
        <position position="38"/>
    </location>
</feature>
<accession>Q8MIM3</accession>
<proteinExistence type="evidence at transcript level"/>
<keyword id="KW-0010">Activator</keyword>
<keyword id="KW-0963">Cytoplasm</keyword>
<keyword id="KW-0206">Cytoskeleton</keyword>
<keyword id="KW-0238">DNA-binding</keyword>
<keyword id="KW-0479">Metal-binding</keyword>
<keyword id="KW-0539">Nucleus</keyword>
<keyword id="KW-0597">Phosphoprotein</keyword>
<keyword id="KW-0675">Receptor</keyword>
<keyword id="KW-1185">Reference proteome</keyword>
<keyword id="KW-0804">Transcription</keyword>
<keyword id="KW-0805">Transcription regulation</keyword>
<keyword id="KW-0862">Zinc</keyword>
<keyword id="KW-0863">Zinc-finger</keyword>
<sequence>MASREDELRNCVVCGDQATGYHFNALTCEGCKGFFRRTVSKSIGPTCPFAGSCEVSKIQRRHCPACRLQKCLDAGMRKDMILSAEALALRRAKQAQRRAQQTPMQLSNEQEELIQTLLGAHTRHMGTMFEQFVQFRPPAHLFIHHQPLPTLAPVLPLVTHFADVNTFMVQQVIKFTKDLPVFRSLPIEDQISLLKGAAVEICHIVLNTTFCLQTQNFLCGPLRYTIEDAARVSPAVGFQVEFLELLFHFHGTLRKLQLQEPEYVLLAAMALFSPDRPGVTQRHEIDQLQEEMALTLQSYIKGQQQRPRDRFLYAKLLGLLAELRSINEAYGYQIQHIQGLSAMMPLLQEICS</sequence>
<protein>
    <recommendedName>
        <fullName>Nuclear receptor subfamily 1 group I member 3</fullName>
    </recommendedName>
    <alternativeName>
        <fullName>Constitutive androstane receptor</fullName>
        <shortName>CAR</shortName>
    </alternativeName>
</protein>